<name>AGRG1_MACMU</name>
<gene>
    <name type="primary">ADGRG1</name>
    <name type="synonym">GPR56</name>
</gene>
<sequence>MTAQSLLQTTLFLLSLLFLVQGAHGRGHREDFRFCSQRNQTHISSLHYKFTPDLRISIENSEEALTVHAPFPEAHPASRSFPHPRGLYHFCLYWDRHAGRLHLLYGKHDFLLSDQASSLLCFQHQEESLAQGPPLFATSVTSWWSPQNISLPSASNFTFSFHSPPHTAAHNASVDMCELKRDLQLLSQFLKHPQKASRRPSATPASQQLQSLESKLTSVRFMGDTVSFEEDRVNATVWKLQPTAGLQDLHIHSRQEQEQSEILEYSVLLPRTLFQRTKGRRGEAEKRLLLVDFSSQALFQDKNSSQVLGEKVLGIVVQNTKVANLTEPVVLTFQHQPQPKNVTLQCVFWVEDPTLSNPGRWSSAGCETVRRETQTSCFCNHLTYFAVLMVSSVEVDAVHKHYLSLLSYVGCVVSALACVVTIAAYLCSRRKPRDYTIKVHMNLLLAVFLLDVSFLLSEPVALTGSQSGCRASAIFLHFSLLACLSWMGLEGYNLYRLVVEVFGTYIPGYLLKLSAMGWGFPIFLVTLVALVDVDNYGPIILAVHRTPESVIYPSMCWIRDSLVSYITNLGLFSLVFLFNMAMLGTMVVQILRLRPHTQKWSHVLTLLGLSLVLGLPWALIFFSFASGTFQLVVLYLFSIITSFQGFLIFLWYWSMRLQARGGPSPLKSNSDSARLPISTGSTSSSRI</sequence>
<accession>Q50DM8</accession>
<keyword id="KW-0130">Cell adhesion</keyword>
<keyword id="KW-1003">Cell membrane</keyword>
<keyword id="KW-0217">Developmental protein</keyword>
<keyword id="KW-0221">Differentiation</keyword>
<keyword id="KW-1015">Disulfide bond</keyword>
<keyword id="KW-0297">G-protein coupled receptor</keyword>
<keyword id="KW-0325">Glycoprotein</keyword>
<keyword id="KW-0358">Heparin-binding</keyword>
<keyword id="KW-0472">Membrane</keyword>
<keyword id="KW-0524">Neurogenesis</keyword>
<keyword id="KW-0675">Receptor</keyword>
<keyword id="KW-1185">Reference proteome</keyword>
<keyword id="KW-0964">Secreted</keyword>
<keyword id="KW-0732">Signal</keyword>
<keyword id="KW-0807">Transducer</keyword>
<keyword id="KW-0812">Transmembrane</keyword>
<keyword id="KW-1133">Transmembrane helix</keyword>
<keyword id="KW-0832">Ubl conjugation</keyword>
<evidence type="ECO:0000250" key="1">
    <source>
        <dbReference type="UniProtKB" id="Q8K209"/>
    </source>
</evidence>
<evidence type="ECO:0000250" key="2">
    <source>
        <dbReference type="UniProtKB" id="Q9Y653"/>
    </source>
</evidence>
<evidence type="ECO:0000255" key="3"/>
<evidence type="ECO:0000255" key="4">
    <source>
        <dbReference type="PROSITE-ProRule" id="PRU00098"/>
    </source>
</evidence>
<evidence type="ECO:0000256" key="5">
    <source>
        <dbReference type="SAM" id="MobiDB-lite"/>
    </source>
</evidence>
<evidence type="ECO:0000305" key="6"/>
<protein>
    <recommendedName>
        <fullName>Adhesion G-protein coupled receptor G1</fullName>
    </recommendedName>
    <alternativeName>
        <fullName>G-protein coupled receptor 56</fullName>
    </alternativeName>
    <component>
        <recommendedName>
            <fullName>Adhesion G-protein coupled receptor G1, N-terminal fragment</fullName>
        </recommendedName>
        <alternativeName>
            <fullName>ADGRG1 N-terminal fragment</fullName>
            <shortName>ADGRG1 NT</shortName>
        </alternativeName>
        <alternativeName>
            <fullName>GPR56 N-terminal fragment</fullName>
            <shortName>GPR56 NT</shortName>
            <shortName>GPR56(N)</shortName>
        </alternativeName>
        <alternativeName>
            <fullName>GPR56 extracellular subunit</fullName>
        </alternativeName>
        <alternativeName>
            <fullName>GPR56 subunit alpha</fullName>
        </alternativeName>
    </component>
    <component>
        <recommendedName>
            <fullName>Adhesion G-protein coupled receptor G1, C-terminal fragment</fullName>
        </recommendedName>
        <alternativeName>
            <fullName>ADGRG1 C-terminal fragment</fullName>
            <shortName>ADGRG1 CT</shortName>
        </alternativeName>
        <alternativeName>
            <fullName>GPR56 C-terminal fragment</fullName>
            <shortName>GPR56 CT</shortName>
            <shortName>GPR56(C)</shortName>
        </alternativeName>
        <alternativeName>
            <fullName>GPR56 seven-transmembrane subunit</fullName>
            <shortName>GPR56 7TM</shortName>
        </alternativeName>
        <alternativeName>
            <fullName>GPR56 subunit beta</fullName>
        </alternativeName>
    </component>
</protein>
<dbReference type="EMBL" id="AY845352">
    <property type="protein sequence ID" value="AAX56343.1"/>
    <property type="molecule type" value="mRNA"/>
</dbReference>
<dbReference type="RefSeq" id="NP_001028192.1">
    <property type="nucleotide sequence ID" value="NM_001033020.1"/>
</dbReference>
<dbReference type="RefSeq" id="XP_014981658.1">
    <property type="nucleotide sequence ID" value="XM_015126172.2"/>
</dbReference>
<dbReference type="RefSeq" id="XP_028696180.1">
    <property type="nucleotide sequence ID" value="XM_028840347.1"/>
</dbReference>
<dbReference type="SMR" id="Q50DM8"/>
<dbReference type="FunCoup" id="Q50DM8">
    <property type="interactions" value="84"/>
</dbReference>
<dbReference type="STRING" id="9544.ENSMMUP00000070957"/>
<dbReference type="MEROPS" id="P02.008"/>
<dbReference type="GlyCosmos" id="Q50DM8">
    <property type="glycosylation" value="8 sites, No reported glycans"/>
</dbReference>
<dbReference type="PaxDb" id="9544-ENSMMUP00000020590"/>
<dbReference type="Ensembl" id="ENSMMUT00000090236.1">
    <property type="protein sequence ID" value="ENSMMUP00000076546.1"/>
    <property type="gene ID" value="ENSMMUG00000015689.4"/>
</dbReference>
<dbReference type="Ensembl" id="ENSMMUT00000095703.1">
    <property type="protein sequence ID" value="ENSMMUP00000065536.1"/>
    <property type="gene ID" value="ENSMMUG00000015689.4"/>
</dbReference>
<dbReference type="Ensembl" id="ENSMMUT00000106207.1">
    <property type="protein sequence ID" value="ENSMMUP00000063257.1"/>
    <property type="gene ID" value="ENSMMUG00000015689.4"/>
</dbReference>
<dbReference type="GeneID" id="613233"/>
<dbReference type="KEGG" id="mcc:613233"/>
<dbReference type="CTD" id="9289"/>
<dbReference type="VEuPathDB" id="HostDB:ENSMMUG00000015689"/>
<dbReference type="VGNC" id="VGNC:99482">
    <property type="gene designation" value="ADGRG1"/>
</dbReference>
<dbReference type="eggNOG" id="KOG4193">
    <property type="taxonomic scope" value="Eukaryota"/>
</dbReference>
<dbReference type="GeneTree" id="ENSGT00940000160843"/>
<dbReference type="InParanoid" id="Q50DM8"/>
<dbReference type="OrthoDB" id="8951579at2759"/>
<dbReference type="Proteomes" id="UP000006718">
    <property type="component" value="Chromosome 20"/>
</dbReference>
<dbReference type="Bgee" id="ENSMMUG00000015689">
    <property type="expression patterns" value="Expressed in adult mammalian kidney and 20 other cell types or tissues"/>
</dbReference>
<dbReference type="ExpressionAtlas" id="Q50DM8">
    <property type="expression patterns" value="baseline"/>
</dbReference>
<dbReference type="GO" id="GO:0005576">
    <property type="term" value="C:extracellular region"/>
    <property type="evidence" value="ECO:0007669"/>
    <property type="project" value="UniProtKB-SubCell"/>
</dbReference>
<dbReference type="GO" id="GO:0097451">
    <property type="term" value="C:glial limiting end-foot"/>
    <property type="evidence" value="ECO:0000250"/>
    <property type="project" value="UniProtKB"/>
</dbReference>
<dbReference type="GO" id="GO:0045121">
    <property type="term" value="C:membrane raft"/>
    <property type="evidence" value="ECO:0007669"/>
    <property type="project" value="UniProtKB-SubCell"/>
</dbReference>
<dbReference type="GO" id="GO:0005886">
    <property type="term" value="C:plasma membrane"/>
    <property type="evidence" value="ECO:0000318"/>
    <property type="project" value="GO_Central"/>
</dbReference>
<dbReference type="GO" id="GO:0005518">
    <property type="term" value="F:collagen binding"/>
    <property type="evidence" value="ECO:0000250"/>
    <property type="project" value="UniProtKB"/>
</dbReference>
<dbReference type="GO" id="GO:0050840">
    <property type="term" value="F:extracellular matrix binding"/>
    <property type="evidence" value="ECO:0000250"/>
    <property type="project" value="UniProtKB"/>
</dbReference>
<dbReference type="GO" id="GO:0004930">
    <property type="term" value="F:G protein-coupled receptor activity"/>
    <property type="evidence" value="ECO:0000250"/>
    <property type="project" value="UniProtKB"/>
</dbReference>
<dbReference type="GO" id="GO:0008201">
    <property type="term" value="F:heparin binding"/>
    <property type="evidence" value="ECO:0000250"/>
    <property type="project" value="UniProtKB"/>
</dbReference>
<dbReference type="GO" id="GO:0007189">
    <property type="term" value="P:adenylate cyclase-activating G protein-coupled receptor signaling pathway"/>
    <property type="evidence" value="ECO:0000318"/>
    <property type="project" value="GO_Central"/>
</dbReference>
<dbReference type="GO" id="GO:0001525">
    <property type="term" value="P:angiogenesis"/>
    <property type="evidence" value="ECO:0000250"/>
    <property type="project" value="UniProtKB"/>
</dbReference>
<dbReference type="GO" id="GO:0007155">
    <property type="term" value="P:cell adhesion"/>
    <property type="evidence" value="ECO:0000250"/>
    <property type="project" value="UniProtKB"/>
</dbReference>
<dbReference type="GO" id="GO:0016477">
    <property type="term" value="P:cell migration"/>
    <property type="evidence" value="ECO:0000250"/>
    <property type="project" value="UniProtKB"/>
</dbReference>
<dbReference type="GO" id="GO:0007166">
    <property type="term" value="P:cell surface receptor signaling pathway"/>
    <property type="evidence" value="ECO:0007669"/>
    <property type="project" value="InterPro"/>
</dbReference>
<dbReference type="GO" id="GO:0021801">
    <property type="term" value="P:cerebral cortex radial glia-guided migration"/>
    <property type="evidence" value="ECO:0000250"/>
    <property type="project" value="UniProtKB"/>
</dbReference>
<dbReference type="GO" id="GO:0021819">
    <property type="term" value="P:layer formation in cerebral cortex"/>
    <property type="evidence" value="ECO:0000250"/>
    <property type="project" value="UniProtKB"/>
</dbReference>
<dbReference type="GO" id="GO:0008285">
    <property type="term" value="P:negative regulation of cell population proliferation"/>
    <property type="evidence" value="ECO:0000250"/>
    <property type="project" value="UniProtKB"/>
</dbReference>
<dbReference type="GO" id="GO:0110076">
    <property type="term" value="P:negative regulation of ferroptosis"/>
    <property type="evidence" value="ECO:0000250"/>
    <property type="project" value="UniProtKB"/>
</dbReference>
<dbReference type="GO" id="GO:2001223">
    <property type="term" value="P:negative regulation of neuron migration"/>
    <property type="evidence" value="ECO:0000250"/>
    <property type="project" value="UniProtKB"/>
</dbReference>
<dbReference type="GO" id="GO:0070444">
    <property type="term" value="P:oligodendrocyte progenitor proliferation"/>
    <property type="evidence" value="ECO:0000250"/>
    <property type="project" value="UniProtKB"/>
</dbReference>
<dbReference type="GO" id="GO:0007200">
    <property type="term" value="P:phospholipase C-activating G protein-coupled receptor signaling pathway"/>
    <property type="evidence" value="ECO:0000250"/>
    <property type="project" value="UniProtKB"/>
</dbReference>
<dbReference type="GO" id="GO:0045785">
    <property type="term" value="P:positive regulation of cell adhesion"/>
    <property type="evidence" value="ECO:0000250"/>
    <property type="project" value="UniProtKB"/>
</dbReference>
<dbReference type="GO" id="GO:0035025">
    <property type="term" value="P:positive regulation of Rho protein signal transduction"/>
    <property type="evidence" value="ECO:0000250"/>
    <property type="project" value="UniProtKB"/>
</dbReference>
<dbReference type="GO" id="GO:1900748">
    <property type="term" value="P:positive regulation of vascular endothelial growth factor signaling pathway"/>
    <property type="evidence" value="ECO:0000250"/>
    <property type="project" value="UniProtKB"/>
</dbReference>
<dbReference type="GO" id="GO:1905806">
    <property type="term" value="P:regulation of synapse pruning"/>
    <property type="evidence" value="ECO:0000250"/>
    <property type="project" value="UniProtKB"/>
</dbReference>
<dbReference type="GO" id="GO:0007266">
    <property type="term" value="P:Rho protein signal transduction"/>
    <property type="evidence" value="ECO:0000250"/>
    <property type="project" value="UniProtKB"/>
</dbReference>
<dbReference type="GO" id="GO:0160221">
    <property type="term" value="P:Rho-activating G protein-coupled receptor signaling pathway"/>
    <property type="evidence" value="ECO:0000250"/>
    <property type="project" value="UniProtKB"/>
</dbReference>
<dbReference type="FunFam" id="2.60.220.50:FF:000014">
    <property type="entry name" value="Adhesion G-protein coupled receptor G1"/>
    <property type="match status" value="1"/>
</dbReference>
<dbReference type="FunFam" id="1.20.1070.10:FF:000117">
    <property type="entry name" value="adhesion G-protein coupled receptor G1"/>
    <property type="match status" value="1"/>
</dbReference>
<dbReference type="Gene3D" id="2.60.220.50">
    <property type="match status" value="1"/>
</dbReference>
<dbReference type="Gene3D" id="1.20.1070.10">
    <property type="entry name" value="Rhodopsin 7-helix transmembrane proteins"/>
    <property type="match status" value="1"/>
</dbReference>
<dbReference type="InterPro" id="IPR040950">
    <property type="entry name" value="ADGRG1_GAIN_A"/>
</dbReference>
<dbReference type="InterPro" id="IPR057244">
    <property type="entry name" value="GAIN_B"/>
</dbReference>
<dbReference type="InterPro" id="IPR046338">
    <property type="entry name" value="GAIN_dom_sf"/>
</dbReference>
<dbReference type="InterPro" id="IPR017981">
    <property type="entry name" value="GPCR_2-like_7TM"/>
</dbReference>
<dbReference type="InterPro" id="IPR000832">
    <property type="entry name" value="GPCR_2_secretin-like"/>
</dbReference>
<dbReference type="InterPro" id="IPR003910">
    <property type="entry name" value="GPR1/GPR3/GPR5"/>
</dbReference>
<dbReference type="InterPro" id="IPR000203">
    <property type="entry name" value="GPS"/>
</dbReference>
<dbReference type="InterPro" id="IPR040679">
    <property type="entry name" value="PLL"/>
</dbReference>
<dbReference type="PANTHER" id="PTHR12011">
    <property type="entry name" value="ADHESION G-PROTEIN COUPLED RECEPTOR"/>
    <property type="match status" value="1"/>
</dbReference>
<dbReference type="PANTHER" id="PTHR12011:SF318">
    <property type="entry name" value="ADHESION G-PROTEIN COUPLED RECEPTOR G1"/>
    <property type="match status" value="1"/>
</dbReference>
<dbReference type="Pfam" id="PF00002">
    <property type="entry name" value="7tm_2"/>
    <property type="match status" value="1"/>
</dbReference>
<dbReference type="Pfam" id="PF18619">
    <property type="entry name" value="GAIN_A"/>
    <property type="match status" value="1"/>
</dbReference>
<dbReference type="Pfam" id="PF01825">
    <property type="entry name" value="GPS"/>
    <property type="match status" value="1"/>
</dbReference>
<dbReference type="Pfam" id="PF18587">
    <property type="entry name" value="PLL"/>
    <property type="match status" value="1"/>
</dbReference>
<dbReference type="PRINTS" id="PR00249">
    <property type="entry name" value="GPCRSECRETIN"/>
</dbReference>
<dbReference type="PRINTS" id="PR01422">
    <property type="entry name" value="GPR56ORPHANR"/>
</dbReference>
<dbReference type="SMART" id="SM00303">
    <property type="entry name" value="GPS"/>
    <property type="match status" value="1"/>
</dbReference>
<dbReference type="SUPFAM" id="SSF81321">
    <property type="entry name" value="Family A G protein-coupled receptor-like"/>
    <property type="match status" value="1"/>
</dbReference>
<dbReference type="PROSITE" id="PS50261">
    <property type="entry name" value="G_PROTEIN_RECEP_F2_4"/>
    <property type="match status" value="1"/>
</dbReference>
<dbReference type="PROSITE" id="PS50221">
    <property type="entry name" value="GAIN_B"/>
    <property type="match status" value="1"/>
</dbReference>
<proteinExistence type="evidence at transcript level"/>
<feature type="signal peptide" evidence="2">
    <location>
        <begin position="1"/>
        <end position="25"/>
    </location>
</feature>
<feature type="chain" id="PRO_0000012881" description="Adhesion G-protein coupled receptor G1">
    <location>
        <begin position="26"/>
        <end position="687"/>
    </location>
</feature>
<feature type="chain" id="PRO_0000423088" description="Adhesion G-protein coupled receptor G1, N-terminal fragment" evidence="2">
    <location>
        <begin position="26"/>
        <end position="382" status="uncertain"/>
    </location>
</feature>
<feature type="chain" id="PRO_0000423089" description="Adhesion G-protein coupled receptor G1, C-terminal fragment" evidence="2">
    <location>
        <begin position="383" status="uncertain"/>
        <end position="687"/>
    </location>
</feature>
<feature type="topological domain" description="Extracellular" evidence="3">
    <location>
        <begin position="26"/>
        <end position="402"/>
    </location>
</feature>
<feature type="transmembrane region" description="Helical; Name=1" evidence="3">
    <location>
        <begin position="403"/>
        <end position="423"/>
    </location>
</feature>
<feature type="topological domain" description="Cytoplasmic" evidence="3">
    <location>
        <begin position="424"/>
        <end position="442"/>
    </location>
</feature>
<feature type="transmembrane region" description="Helical; Name=2" evidence="3">
    <location>
        <begin position="443"/>
        <end position="463"/>
    </location>
</feature>
<feature type="topological domain" description="Extracellular" evidence="3">
    <location>
        <begin position="464"/>
        <end position="470"/>
    </location>
</feature>
<feature type="transmembrane region" description="Helical; Name=3" evidence="3">
    <location>
        <begin position="471"/>
        <end position="491"/>
    </location>
</feature>
<feature type="topological domain" description="Cytoplasmic" evidence="3">
    <location>
        <begin position="492"/>
        <end position="512"/>
    </location>
</feature>
<feature type="transmembrane region" description="Helical; Name=4" evidence="3">
    <location>
        <begin position="513"/>
        <end position="533"/>
    </location>
</feature>
<feature type="topological domain" description="Extracellular" evidence="3">
    <location>
        <begin position="534"/>
        <end position="570"/>
    </location>
</feature>
<feature type="transmembrane region" description="Helical; Name=5" evidence="3">
    <location>
        <begin position="571"/>
        <end position="591"/>
    </location>
</feature>
<feature type="topological domain" description="Cytoplasmic" evidence="3">
    <location>
        <begin position="592"/>
        <end position="603"/>
    </location>
</feature>
<feature type="transmembrane region" description="Helical; Name=6" evidence="3">
    <location>
        <begin position="604"/>
        <end position="624"/>
    </location>
</feature>
<feature type="topological domain" description="Extracellular" evidence="3">
    <location>
        <begin position="625"/>
        <end position="630"/>
    </location>
</feature>
<feature type="transmembrane region" description="Helical; Name=7" evidence="3">
    <location>
        <begin position="631"/>
        <end position="651"/>
    </location>
</feature>
<feature type="topological domain" description="Cytoplasmic" evidence="3">
    <location>
        <begin position="652"/>
        <end position="687"/>
    </location>
</feature>
<feature type="domain" description="GAIN-B" evidence="4">
    <location>
        <begin position="224"/>
        <end position="395"/>
    </location>
</feature>
<feature type="region of interest" description="GPS" evidence="4">
    <location>
        <begin position="346"/>
        <end position="395"/>
    </location>
</feature>
<feature type="region of interest" description="Stachel" evidence="2">
    <location>
        <begin position="384"/>
        <end position="397"/>
    </location>
</feature>
<feature type="region of interest" description="Disordered" evidence="5">
    <location>
        <begin position="664"/>
        <end position="687"/>
    </location>
</feature>
<feature type="compositionally biased region" description="Polar residues" evidence="5">
    <location>
        <begin position="666"/>
        <end position="687"/>
    </location>
</feature>
<feature type="binding site" evidence="2">
    <location>
        <begin position="26"/>
        <end position="33"/>
    </location>
    <ligand>
        <name>heparin</name>
        <dbReference type="ChEBI" id="CHEBI:28304"/>
    </ligand>
</feature>
<feature type="binding site" evidence="2">
    <location>
        <begin position="190"/>
        <end position="200"/>
    </location>
    <ligand>
        <name>heparin</name>
        <dbReference type="ChEBI" id="CHEBI:28304"/>
    </ligand>
</feature>
<feature type="site" description="Cleavage; by autolysis" evidence="4">
    <location>
        <begin position="382"/>
        <end position="383"/>
    </location>
</feature>
<feature type="glycosylation site" description="N-linked (GlcNAc...) asparagine" evidence="3">
    <location>
        <position position="39"/>
    </location>
</feature>
<feature type="glycosylation site" description="N-linked (GlcNAc...) asparagine" evidence="3">
    <location>
        <position position="148"/>
    </location>
</feature>
<feature type="glycosylation site" description="N-linked (GlcNAc...) asparagine" evidence="3">
    <location>
        <position position="156"/>
    </location>
</feature>
<feature type="glycosylation site" description="N-linked (GlcNAc...) asparagine" evidence="3">
    <location>
        <position position="171"/>
    </location>
</feature>
<feature type="glycosylation site" description="N-linked (GlcNAc...) asparagine" evidence="3">
    <location>
        <position position="234"/>
    </location>
</feature>
<feature type="glycosylation site" description="N-linked (GlcNAc...) asparagine" evidence="3">
    <location>
        <position position="303"/>
    </location>
</feature>
<feature type="glycosylation site" description="N-linked (GlcNAc...) asparagine" evidence="3">
    <location>
        <position position="324"/>
    </location>
</feature>
<feature type="glycosylation site" description="N-linked (GlcNAc...) asparagine" evidence="3">
    <location>
        <position position="341"/>
    </location>
</feature>
<feature type="disulfide bond" evidence="1">
    <location>
        <begin position="35"/>
        <end position="91"/>
    </location>
</feature>
<feature type="disulfide bond" evidence="1">
    <location>
        <begin position="121"/>
        <end position="177"/>
    </location>
</feature>
<feature type="disulfide bond" evidence="4">
    <location>
        <begin position="346"/>
        <end position="377"/>
    </location>
</feature>
<feature type="disulfide bond" evidence="4">
    <location>
        <begin position="366"/>
        <end position="379"/>
    </location>
</feature>
<organism>
    <name type="scientific">Macaca mulatta</name>
    <name type="common">Rhesus macaque</name>
    <dbReference type="NCBI Taxonomy" id="9544"/>
    <lineage>
        <taxon>Eukaryota</taxon>
        <taxon>Metazoa</taxon>
        <taxon>Chordata</taxon>
        <taxon>Craniata</taxon>
        <taxon>Vertebrata</taxon>
        <taxon>Euteleostomi</taxon>
        <taxon>Mammalia</taxon>
        <taxon>Eutheria</taxon>
        <taxon>Euarchontoglires</taxon>
        <taxon>Primates</taxon>
        <taxon>Haplorrhini</taxon>
        <taxon>Catarrhini</taxon>
        <taxon>Cercopithecidae</taxon>
        <taxon>Cercopithecinae</taxon>
        <taxon>Macaca</taxon>
    </lineage>
</organism>
<comment type="function">
    <text evidence="1 2">Adhesion G-protein coupled receptor (aGPCR) for steroid hormone 17alpha-hydroxypregnenolone (17-OH), which is involved in cell adhesion and cell-cell interactions. Ligand binding causes a conformation change that triggers signaling via guanine nucleotide-binding proteins (G proteins) and modulates the activity of downstream effectors, such as RhoA pathway. ADGRG1 is coupled to G(12) and/or G(13) G proteins (GNA12 and GNA13, respectively) and mediates the activation Rho small GTPases (By similarity). Acts as a potent suppressor of ferroptosis: binding to 17-OH-binding initiates signaling that down-regulates CD36 and alleviates ferroptosis-induced liver injury. Ligand-binding also induces cell adhesion activity via association with proteins such as collagen III/COL3A1 and TGM2. Mediates cell matrix adhesion in developing neurons and hematopoietic stem cells (By similarity). Involved in cortical development, specifically in maintenance of the pial basement membrane integrity and in cortical lamination: association with COL3A1 in the developing brain inhibits neuronal migration via activation of the RhoA pathway (By similarity). Together with TGM2, acts as a regulator of myelination and myelin repair in oligodendrocyte precursor cells (By similarity). Acts as a hemostatic sensor of shear force: G protein-coupled receptor signaling is activated in response to shear force in platelets, promoting G(13) G protein signaling, and platelet shape change and aggregation in a COL3A1-dependent manner. Acts as an inhibitor of VEGFA production thereby inhibiting angiogenesis through a signaling pathway mediated by PRKCA (By similarity). Plays a role in the maintenance of hematopoietic stem cells in bone marrow niche. Plays an essential role in testis development (By similarity).</text>
</comment>
<comment type="activity regulation">
    <text evidence="2">Forms a heterodimer of 2 chains generated by proteolytic processing that remain associated through non-covalent interactions mediated by the GAIN-B domain. In the inactivated receptor, the Stachel sequence (also named stalk) is embedded in the GAIN-B domain, where it adopts a beta-strand conformation. On activation, the Stachel moves into the 7 transmembrane region and adopts a twisted hook-shaped configuration that forms contacts within the receptor, leading to coupling of a G-alpha protein, which activates signaling. The cleaved GAIN-B and N-terminal domains can then dissociate from the rest of the receptor.</text>
</comment>
<comment type="subunit">
    <text evidence="2">Heterodimer of 2 chains generated by proteolytic processing; the large extracellular N-terminal fragment (ADGRG1 NT) and the membrane-bound C-terminal fragment (ADGRG1-CT) predominantly remain associated and non-covalently linked. ADGRG1 NT self-associates in a trans-trans manner; the homophilic interaction enhances receptor signaling. Interacts with TGM2. Interacts with heparin; leading to the reduction of ADGRG1 shedding. Interacts with COL3A1. Part of a GPCR-tetraspanin complex at least consisting of ADGRG1, CD81, eventually CD9, and GNA11 in which CD81 is enhancing the association of ADGRG1 with GNA11.</text>
</comment>
<comment type="subcellular location">
    <subcellularLocation>
        <location evidence="2">Cell membrane</location>
        <topology evidence="2">Multi-pass membrane protein</topology>
    </subcellularLocation>
</comment>
<comment type="subcellular location">
    <molecule>Adhesion G-protein coupled receptor G1, N-terminal fragment</molecule>
    <subcellularLocation>
        <location evidence="2">Secreted</location>
    </subcellularLocation>
    <text evidence="2">Activation of the G protein-coupled receptor and interaction with COL3A1 leads to the release of ADGRG1 NT from the membrane.</text>
</comment>
<comment type="subcellular location">
    <molecule>Adhesion G-protein coupled receptor G1, C-terminal fragment</molecule>
    <subcellularLocation>
        <location evidence="2">Membrane raft</location>
    </subcellularLocation>
    <text evidence="2">Interaction with its ligand COL3A1 leads to the release of ADGRG1 NT from the membrane and triggers the association of ADGRG1 CT with lipid rafts.</text>
</comment>
<comment type="domain">
    <text evidence="2">The Stachel sequence (also named stalk) in the C-terminal part of the extracellular domain (ECD) functions as a tethered agonist. In the inactivated receptor, the Stachel sequence (also named stalk) is embedded in the GAIN-B domain, where it adopts a beta-strand conformation. On activation, the Stachel moves into the 7 transmembrane region and adopts a twisted hook-shaped configuration that forms contacts within the receptor, leading to coupling of a G-alpha protein, which activates signaling.</text>
</comment>
<comment type="PTM">
    <text evidence="2">Autoproteolytically cleaved into 2 fragments; the large extracellular N-terminal fragment (ADGRG1 NT) and the membrane-bound C-terminal fragment (ADGRG1 CT) predominantly remain associated and non-covalently linked. Shedding to yield the secreted ADGRG1 N-terminal fragment seems to involve metalloprotease(s).</text>
</comment>
<comment type="PTM">
    <text evidence="2">Ubiquitinated. Undergoes polyubiquitination upon activation.</text>
</comment>
<comment type="similarity">
    <text evidence="6">Belongs to the G-protein coupled receptor 2 family. LN-TM7 subfamily.</text>
</comment>
<reference key="1">
    <citation type="submission" date="2004-12" db="EMBL/GenBank/DDBJ databases">
        <title>Detecting selection requires more than just human-chimpanzee-mouse trios.</title>
        <authorList>
            <person name="Piao X."/>
            <person name="Collura R.V."/>
            <person name="Lobell A."/>
            <person name="Bailey A.S."/>
            <person name="Walsh C.A."/>
            <person name="Ruvolo M."/>
        </authorList>
    </citation>
    <scope>NUCLEOTIDE SEQUENCE [MRNA]</scope>
</reference>